<feature type="chain" id="PRO_0000272477" description="Phosphate import ATP-binding protein PstB">
    <location>
        <begin position="1"/>
        <end position="259"/>
    </location>
</feature>
<feature type="domain" description="ABC transporter" evidence="1">
    <location>
        <begin position="10"/>
        <end position="254"/>
    </location>
</feature>
<feature type="binding site" evidence="1">
    <location>
        <begin position="43"/>
        <end position="50"/>
    </location>
    <ligand>
        <name>ATP</name>
        <dbReference type="ChEBI" id="CHEBI:30616"/>
    </ligand>
</feature>
<name>PSTB_METFK</name>
<proteinExistence type="inferred from homology"/>
<gene>
    <name evidence="1" type="primary">pstB</name>
    <name type="ordered locus">Mfla_0792</name>
</gene>
<dbReference type="EC" id="7.3.2.1" evidence="1"/>
<dbReference type="EMBL" id="CP000284">
    <property type="protein sequence ID" value="ABE49060.1"/>
    <property type="molecule type" value="Genomic_DNA"/>
</dbReference>
<dbReference type="RefSeq" id="WP_011479157.1">
    <property type="nucleotide sequence ID" value="NC_007947.1"/>
</dbReference>
<dbReference type="SMR" id="Q1H377"/>
<dbReference type="STRING" id="265072.Mfla_0792"/>
<dbReference type="KEGG" id="mfa:Mfla_0792"/>
<dbReference type="eggNOG" id="COG1117">
    <property type="taxonomic scope" value="Bacteria"/>
</dbReference>
<dbReference type="HOGENOM" id="CLU_000604_1_22_4"/>
<dbReference type="OrthoDB" id="9802264at2"/>
<dbReference type="Proteomes" id="UP000002440">
    <property type="component" value="Chromosome"/>
</dbReference>
<dbReference type="GO" id="GO:0005886">
    <property type="term" value="C:plasma membrane"/>
    <property type="evidence" value="ECO:0007669"/>
    <property type="project" value="UniProtKB-SubCell"/>
</dbReference>
<dbReference type="GO" id="GO:0005524">
    <property type="term" value="F:ATP binding"/>
    <property type="evidence" value="ECO:0007669"/>
    <property type="project" value="UniProtKB-KW"/>
</dbReference>
<dbReference type="GO" id="GO:0016887">
    <property type="term" value="F:ATP hydrolysis activity"/>
    <property type="evidence" value="ECO:0007669"/>
    <property type="project" value="InterPro"/>
</dbReference>
<dbReference type="GO" id="GO:0015415">
    <property type="term" value="F:ATPase-coupled phosphate ion transmembrane transporter activity"/>
    <property type="evidence" value="ECO:0007669"/>
    <property type="project" value="UniProtKB-EC"/>
</dbReference>
<dbReference type="GO" id="GO:0035435">
    <property type="term" value="P:phosphate ion transmembrane transport"/>
    <property type="evidence" value="ECO:0007669"/>
    <property type="project" value="InterPro"/>
</dbReference>
<dbReference type="CDD" id="cd03260">
    <property type="entry name" value="ABC_PstB_phosphate_transporter"/>
    <property type="match status" value="1"/>
</dbReference>
<dbReference type="Gene3D" id="3.40.50.300">
    <property type="entry name" value="P-loop containing nucleotide triphosphate hydrolases"/>
    <property type="match status" value="1"/>
</dbReference>
<dbReference type="InterPro" id="IPR003593">
    <property type="entry name" value="AAA+_ATPase"/>
</dbReference>
<dbReference type="InterPro" id="IPR003439">
    <property type="entry name" value="ABC_transporter-like_ATP-bd"/>
</dbReference>
<dbReference type="InterPro" id="IPR017871">
    <property type="entry name" value="ABC_transporter-like_CS"/>
</dbReference>
<dbReference type="InterPro" id="IPR027417">
    <property type="entry name" value="P-loop_NTPase"/>
</dbReference>
<dbReference type="InterPro" id="IPR005670">
    <property type="entry name" value="PstB-like"/>
</dbReference>
<dbReference type="NCBIfam" id="TIGR00972">
    <property type="entry name" value="3a0107s01c2"/>
    <property type="match status" value="1"/>
</dbReference>
<dbReference type="PANTHER" id="PTHR43423">
    <property type="entry name" value="ABC TRANSPORTER I FAMILY MEMBER 17"/>
    <property type="match status" value="1"/>
</dbReference>
<dbReference type="PANTHER" id="PTHR43423:SF1">
    <property type="entry name" value="ABC TRANSPORTER I FAMILY MEMBER 17"/>
    <property type="match status" value="1"/>
</dbReference>
<dbReference type="Pfam" id="PF00005">
    <property type="entry name" value="ABC_tran"/>
    <property type="match status" value="1"/>
</dbReference>
<dbReference type="SMART" id="SM00382">
    <property type="entry name" value="AAA"/>
    <property type="match status" value="1"/>
</dbReference>
<dbReference type="SUPFAM" id="SSF52540">
    <property type="entry name" value="P-loop containing nucleoside triphosphate hydrolases"/>
    <property type="match status" value="1"/>
</dbReference>
<dbReference type="PROSITE" id="PS00211">
    <property type="entry name" value="ABC_TRANSPORTER_1"/>
    <property type="match status" value="1"/>
</dbReference>
<dbReference type="PROSITE" id="PS50893">
    <property type="entry name" value="ABC_TRANSPORTER_2"/>
    <property type="match status" value="1"/>
</dbReference>
<dbReference type="PROSITE" id="PS51238">
    <property type="entry name" value="PSTB"/>
    <property type="match status" value="1"/>
</dbReference>
<reference key="1">
    <citation type="submission" date="2006-03" db="EMBL/GenBank/DDBJ databases">
        <title>Complete sequence of Methylobacillus flagellatus KT.</title>
        <authorList>
            <consortium name="US DOE Joint Genome Institute"/>
            <person name="Copeland A."/>
            <person name="Lucas S."/>
            <person name="Lapidus A."/>
            <person name="Barry K."/>
            <person name="Detter J.C."/>
            <person name="Glavina del Rio T."/>
            <person name="Hammon N."/>
            <person name="Israni S."/>
            <person name="Dalin E."/>
            <person name="Tice H."/>
            <person name="Pitluck S."/>
            <person name="Brettin T."/>
            <person name="Bruce D."/>
            <person name="Han C."/>
            <person name="Tapia R."/>
            <person name="Saunders E."/>
            <person name="Gilna P."/>
            <person name="Schmutz J."/>
            <person name="Larimer F."/>
            <person name="Land M."/>
            <person name="Kyrpides N."/>
            <person name="Anderson I."/>
            <person name="Richardson P."/>
        </authorList>
    </citation>
    <scope>NUCLEOTIDE SEQUENCE [LARGE SCALE GENOMIC DNA]</scope>
    <source>
        <strain>ATCC 51484 / DSM 6875 / VKM B-1610 / KT</strain>
    </source>
</reference>
<accession>Q1H377</accession>
<organism>
    <name type="scientific">Methylobacillus flagellatus (strain ATCC 51484 / DSM 6875 / VKM B-1610 / KT)</name>
    <dbReference type="NCBI Taxonomy" id="265072"/>
    <lineage>
        <taxon>Bacteria</taxon>
        <taxon>Pseudomonadati</taxon>
        <taxon>Pseudomonadota</taxon>
        <taxon>Betaproteobacteria</taxon>
        <taxon>Nitrosomonadales</taxon>
        <taxon>Methylophilaceae</taxon>
        <taxon>Methylobacillus</taxon>
    </lineage>
</organism>
<sequence>MVTTTSPVKAESRNLSFYYSSGHKALKGITMPLYEKRITALIGPSGCGKSTFLRCFNRMHDLYPGNKYDGQIVMYPDNTNILDNGVDPIEVRMRISMVFQKPNPFPKSIYENVAYGLRVRGERNKRVVDDKVEEALKGAALWDEVKDRLHDLAFNLSGGQQQRLCIARALATDPEIMLFDEPTSALDPIATANIEELMSELRNKLTILVVTHNMQQAARVSDYTAYMYLGELIEYDDTDKIFTNPSRKETEDYITGKFG</sequence>
<protein>
    <recommendedName>
        <fullName evidence="1">Phosphate import ATP-binding protein PstB</fullName>
        <ecNumber evidence="1">7.3.2.1</ecNumber>
    </recommendedName>
    <alternativeName>
        <fullName evidence="1">ABC phosphate transporter</fullName>
    </alternativeName>
    <alternativeName>
        <fullName evidence="1">Phosphate-transporting ATPase</fullName>
    </alternativeName>
</protein>
<comment type="function">
    <text evidence="1">Part of the ABC transporter complex PstSACB involved in phosphate import. Responsible for energy coupling to the transport system.</text>
</comment>
<comment type="catalytic activity">
    <reaction evidence="1">
        <text>phosphate(out) + ATP + H2O = ADP + 2 phosphate(in) + H(+)</text>
        <dbReference type="Rhea" id="RHEA:24440"/>
        <dbReference type="ChEBI" id="CHEBI:15377"/>
        <dbReference type="ChEBI" id="CHEBI:15378"/>
        <dbReference type="ChEBI" id="CHEBI:30616"/>
        <dbReference type="ChEBI" id="CHEBI:43474"/>
        <dbReference type="ChEBI" id="CHEBI:456216"/>
        <dbReference type="EC" id="7.3.2.1"/>
    </reaction>
</comment>
<comment type="subunit">
    <text evidence="1">The complex is composed of two ATP-binding proteins (PstB), two transmembrane proteins (PstC and PstA) and a solute-binding protein (PstS).</text>
</comment>
<comment type="subcellular location">
    <subcellularLocation>
        <location evidence="1">Cell inner membrane</location>
        <topology evidence="1">Peripheral membrane protein</topology>
    </subcellularLocation>
</comment>
<comment type="similarity">
    <text evidence="1">Belongs to the ABC transporter superfamily. Phosphate importer (TC 3.A.1.7) family.</text>
</comment>
<keyword id="KW-0067">ATP-binding</keyword>
<keyword id="KW-0997">Cell inner membrane</keyword>
<keyword id="KW-1003">Cell membrane</keyword>
<keyword id="KW-0472">Membrane</keyword>
<keyword id="KW-0547">Nucleotide-binding</keyword>
<keyword id="KW-0592">Phosphate transport</keyword>
<keyword id="KW-1185">Reference proteome</keyword>
<keyword id="KW-1278">Translocase</keyword>
<keyword id="KW-0813">Transport</keyword>
<evidence type="ECO:0000255" key="1">
    <source>
        <dbReference type="HAMAP-Rule" id="MF_01702"/>
    </source>
</evidence>